<accession>A1TMP7</accession>
<name>EFP_PARC0</name>
<protein>
    <recommendedName>
        <fullName evidence="1">Elongation factor P</fullName>
        <shortName evidence="1">EF-P</shortName>
    </recommendedName>
</protein>
<comment type="function">
    <text evidence="1">Involved in peptide bond synthesis. Stimulates efficient translation and peptide-bond synthesis on native or reconstituted 70S ribosomes in vitro. Probably functions indirectly by altering the affinity of the ribosome for aminoacyl-tRNA, thus increasing their reactivity as acceptors for peptidyl transferase.</text>
</comment>
<comment type="pathway">
    <text evidence="1">Protein biosynthesis; polypeptide chain elongation.</text>
</comment>
<comment type="subcellular location">
    <subcellularLocation>
        <location evidence="1">Cytoplasm</location>
    </subcellularLocation>
</comment>
<comment type="similarity">
    <text evidence="1">Belongs to the elongation factor P family.</text>
</comment>
<dbReference type="EMBL" id="CP000512">
    <property type="protein sequence ID" value="ABM32235.1"/>
    <property type="molecule type" value="Genomic_DNA"/>
</dbReference>
<dbReference type="RefSeq" id="WP_011794783.1">
    <property type="nucleotide sequence ID" value="NC_008752.1"/>
</dbReference>
<dbReference type="SMR" id="A1TMP7"/>
<dbReference type="STRING" id="397945.Aave_1648"/>
<dbReference type="GeneID" id="79791273"/>
<dbReference type="KEGG" id="aav:Aave_1648"/>
<dbReference type="eggNOG" id="COG0231">
    <property type="taxonomic scope" value="Bacteria"/>
</dbReference>
<dbReference type="HOGENOM" id="CLU_074944_2_1_4"/>
<dbReference type="OrthoDB" id="9801844at2"/>
<dbReference type="UniPathway" id="UPA00345"/>
<dbReference type="Proteomes" id="UP000002596">
    <property type="component" value="Chromosome"/>
</dbReference>
<dbReference type="GO" id="GO:0005737">
    <property type="term" value="C:cytoplasm"/>
    <property type="evidence" value="ECO:0007669"/>
    <property type="project" value="UniProtKB-SubCell"/>
</dbReference>
<dbReference type="GO" id="GO:0003746">
    <property type="term" value="F:translation elongation factor activity"/>
    <property type="evidence" value="ECO:0007669"/>
    <property type="project" value="UniProtKB-UniRule"/>
</dbReference>
<dbReference type="GO" id="GO:0043043">
    <property type="term" value="P:peptide biosynthetic process"/>
    <property type="evidence" value="ECO:0007669"/>
    <property type="project" value="InterPro"/>
</dbReference>
<dbReference type="CDD" id="cd05794">
    <property type="entry name" value="S1_EF-P_repeat_2"/>
    <property type="match status" value="1"/>
</dbReference>
<dbReference type="FunFam" id="2.30.30.30:FF:000003">
    <property type="entry name" value="Elongation factor P"/>
    <property type="match status" value="1"/>
</dbReference>
<dbReference type="FunFam" id="2.40.50.140:FF:000004">
    <property type="entry name" value="Elongation factor P"/>
    <property type="match status" value="1"/>
</dbReference>
<dbReference type="FunFam" id="2.40.50.140:FF:000009">
    <property type="entry name" value="Elongation factor P"/>
    <property type="match status" value="1"/>
</dbReference>
<dbReference type="Gene3D" id="2.30.30.30">
    <property type="match status" value="1"/>
</dbReference>
<dbReference type="Gene3D" id="2.40.50.140">
    <property type="entry name" value="Nucleic acid-binding proteins"/>
    <property type="match status" value="2"/>
</dbReference>
<dbReference type="HAMAP" id="MF_00141">
    <property type="entry name" value="EF_P"/>
    <property type="match status" value="1"/>
</dbReference>
<dbReference type="InterPro" id="IPR015365">
    <property type="entry name" value="Elong-fact-P_C"/>
</dbReference>
<dbReference type="InterPro" id="IPR012340">
    <property type="entry name" value="NA-bd_OB-fold"/>
</dbReference>
<dbReference type="InterPro" id="IPR014722">
    <property type="entry name" value="Rib_uL2_dom2"/>
</dbReference>
<dbReference type="InterPro" id="IPR020599">
    <property type="entry name" value="Transl_elong_fac_P/YeiP"/>
</dbReference>
<dbReference type="InterPro" id="IPR013185">
    <property type="entry name" value="Transl_elong_KOW-like"/>
</dbReference>
<dbReference type="InterPro" id="IPR001059">
    <property type="entry name" value="Transl_elong_P/YeiP_cen"/>
</dbReference>
<dbReference type="InterPro" id="IPR013852">
    <property type="entry name" value="Transl_elong_P/YeiP_CS"/>
</dbReference>
<dbReference type="InterPro" id="IPR011768">
    <property type="entry name" value="Transl_elongation_fac_P"/>
</dbReference>
<dbReference type="InterPro" id="IPR008991">
    <property type="entry name" value="Translation_prot_SH3-like_sf"/>
</dbReference>
<dbReference type="NCBIfam" id="TIGR00038">
    <property type="entry name" value="efp"/>
    <property type="match status" value="1"/>
</dbReference>
<dbReference type="NCBIfam" id="NF001810">
    <property type="entry name" value="PRK00529.1"/>
    <property type="match status" value="1"/>
</dbReference>
<dbReference type="PANTHER" id="PTHR30053">
    <property type="entry name" value="ELONGATION FACTOR P"/>
    <property type="match status" value="1"/>
</dbReference>
<dbReference type="PANTHER" id="PTHR30053:SF12">
    <property type="entry name" value="ELONGATION FACTOR P (EF-P) FAMILY PROTEIN"/>
    <property type="match status" value="1"/>
</dbReference>
<dbReference type="Pfam" id="PF01132">
    <property type="entry name" value="EFP"/>
    <property type="match status" value="1"/>
</dbReference>
<dbReference type="Pfam" id="PF08207">
    <property type="entry name" value="EFP_N"/>
    <property type="match status" value="1"/>
</dbReference>
<dbReference type="Pfam" id="PF09285">
    <property type="entry name" value="Elong-fact-P_C"/>
    <property type="match status" value="1"/>
</dbReference>
<dbReference type="PIRSF" id="PIRSF005901">
    <property type="entry name" value="EF-P"/>
    <property type="match status" value="1"/>
</dbReference>
<dbReference type="SMART" id="SM01185">
    <property type="entry name" value="EFP"/>
    <property type="match status" value="1"/>
</dbReference>
<dbReference type="SMART" id="SM00841">
    <property type="entry name" value="Elong-fact-P_C"/>
    <property type="match status" value="1"/>
</dbReference>
<dbReference type="SUPFAM" id="SSF50249">
    <property type="entry name" value="Nucleic acid-binding proteins"/>
    <property type="match status" value="2"/>
</dbReference>
<dbReference type="SUPFAM" id="SSF50104">
    <property type="entry name" value="Translation proteins SH3-like domain"/>
    <property type="match status" value="1"/>
</dbReference>
<dbReference type="PROSITE" id="PS01275">
    <property type="entry name" value="EFP"/>
    <property type="match status" value="1"/>
</dbReference>
<evidence type="ECO:0000255" key="1">
    <source>
        <dbReference type="HAMAP-Rule" id="MF_00141"/>
    </source>
</evidence>
<gene>
    <name evidence="1" type="primary">efp</name>
    <name type="ordered locus">Aave_1648</name>
</gene>
<sequence length="184" mass="20560">MKIAQEIRAGNVIMHGKDPMIVLKTEYARGGRGAATVRMKLKALLNNMGTEVVFKADDKIDNVILDKKECTYSYFADPMYVCMDAEYNQYEVEAENMGDALNYLEDGMAVEVVFYDGKAISVELPTSVEREITWTEPAVKGDTSGKVLKPAKIATGFEVAVPLFVNQGDRIEIDTRTGEYRKRV</sequence>
<reference key="1">
    <citation type="submission" date="2006-12" db="EMBL/GenBank/DDBJ databases">
        <title>Complete sequence of Acidovorax avenae subsp. citrulli AAC00-1.</title>
        <authorList>
            <person name="Copeland A."/>
            <person name="Lucas S."/>
            <person name="Lapidus A."/>
            <person name="Barry K."/>
            <person name="Detter J.C."/>
            <person name="Glavina del Rio T."/>
            <person name="Dalin E."/>
            <person name="Tice H."/>
            <person name="Pitluck S."/>
            <person name="Kiss H."/>
            <person name="Brettin T."/>
            <person name="Bruce D."/>
            <person name="Han C."/>
            <person name="Tapia R."/>
            <person name="Gilna P."/>
            <person name="Schmutz J."/>
            <person name="Larimer F."/>
            <person name="Land M."/>
            <person name="Hauser L."/>
            <person name="Kyrpides N."/>
            <person name="Kim E."/>
            <person name="Stahl D."/>
            <person name="Richardson P."/>
        </authorList>
    </citation>
    <scope>NUCLEOTIDE SEQUENCE [LARGE SCALE GENOMIC DNA]</scope>
    <source>
        <strain>AAC00-1</strain>
    </source>
</reference>
<feature type="chain" id="PRO_1000010666" description="Elongation factor P">
    <location>
        <begin position="1"/>
        <end position="184"/>
    </location>
</feature>
<organism>
    <name type="scientific">Paracidovorax citrulli (strain AAC00-1)</name>
    <name type="common">Acidovorax citrulli</name>
    <dbReference type="NCBI Taxonomy" id="397945"/>
    <lineage>
        <taxon>Bacteria</taxon>
        <taxon>Pseudomonadati</taxon>
        <taxon>Pseudomonadota</taxon>
        <taxon>Betaproteobacteria</taxon>
        <taxon>Burkholderiales</taxon>
        <taxon>Comamonadaceae</taxon>
        <taxon>Paracidovorax</taxon>
    </lineage>
</organism>
<keyword id="KW-0963">Cytoplasm</keyword>
<keyword id="KW-0251">Elongation factor</keyword>
<keyword id="KW-0648">Protein biosynthesis</keyword>
<proteinExistence type="inferred from homology"/>